<protein>
    <recommendedName>
        <fullName evidence="1">Ribosome-binding factor A</fullName>
    </recommendedName>
</protein>
<proteinExistence type="inferred from homology"/>
<reference key="1">
    <citation type="journal article" date="2006" name="Proc. Natl. Acad. Sci. U.S.A.">
        <title>Comparative genomics of the lactic acid bacteria.</title>
        <authorList>
            <person name="Makarova K.S."/>
            <person name="Slesarev A."/>
            <person name="Wolf Y.I."/>
            <person name="Sorokin A."/>
            <person name="Mirkin B."/>
            <person name="Koonin E.V."/>
            <person name="Pavlov A."/>
            <person name="Pavlova N."/>
            <person name="Karamychev V."/>
            <person name="Polouchine N."/>
            <person name="Shakhova V."/>
            <person name="Grigoriev I."/>
            <person name="Lou Y."/>
            <person name="Rohksar D."/>
            <person name="Lucas S."/>
            <person name="Huang K."/>
            <person name="Goodstein D.M."/>
            <person name="Hawkins T."/>
            <person name="Plengvidhya V."/>
            <person name="Welker D."/>
            <person name="Hughes J."/>
            <person name="Goh Y."/>
            <person name="Benson A."/>
            <person name="Baldwin K."/>
            <person name="Lee J.-H."/>
            <person name="Diaz-Muniz I."/>
            <person name="Dosti B."/>
            <person name="Smeianov V."/>
            <person name="Wechter W."/>
            <person name="Barabote R."/>
            <person name="Lorca G."/>
            <person name="Altermann E."/>
            <person name="Barrangou R."/>
            <person name="Ganesan B."/>
            <person name="Xie Y."/>
            <person name="Rawsthorne H."/>
            <person name="Tamir D."/>
            <person name="Parker C."/>
            <person name="Breidt F."/>
            <person name="Broadbent J.R."/>
            <person name="Hutkins R."/>
            <person name="O'Sullivan D."/>
            <person name="Steele J."/>
            <person name="Unlu G."/>
            <person name="Saier M.H. Jr."/>
            <person name="Klaenhammer T."/>
            <person name="Richardson P."/>
            <person name="Kozyavkin S."/>
            <person name="Weimer B.C."/>
            <person name="Mills D.A."/>
        </authorList>
    </citation>
    <scope>NUCLEOTIDE SEQUENCE [LARGE SCALE GENOMIC DNA]</scope>
    <source>
        <strain>ATCC BAA-331 / PSU-1</strain>
    </source>
</reference>
<evidence type="ECO:0000255" key="1">
    <source>
        <dbReference type="HAMAP-Rule" id="MF_00003"/>
    </source>
</evidence>
<sequence length="121" mass="13660">MPKHAKSARLLRVEGTIQREISEILVKEVSDPRLKDVTITGIDMTPDFSIAYVYWTIYSDLASSGEKADAGLQAAKGLIKRQLARKMTTFKIPDLIFKRDTAIEYGDHIEQLIAKLNHESK</sequence>
<accession>Q04GM9</accession>
<gene>
    <name evidence="1" type="primary">rbfA</name>
    <name type="ordered locus">OEOE_0434</name>
</gene>
<dbReference type="EMBL" id="CP000411">
    <property type="protein sequence ID" value="ABJ56393.1"/>
    <property type="molecule type" value="Genomic_DNA"/>
</dbReference>
<dbReference type="RefSeq" id="WP_002818232.1">
    <property type="nucleotide sequence ID" value="NC_008528.1"/>
</dbReference>
<dbReference type="SMR" id="Q04GM9"/>
<dbReference type="STRING" id="203123.OEOE_0434"/>
<dbReference type="GeneID" id="75065228"/>
<dbReference type="KEGG" id="ooe:OEOE_0434"/>
<dbReference type="eggNOG" id="COG0858">
    <property type="taxonomic scope" value="Bacteria"/>
</dbReference>
<dbReference type="HOGENOM" id="CLU_089475_3_0_9"/>
<dbReference type="Proteomes" id="UP000000774">
    <property type="component" value="Chromosome"/>
</dbReference>
<dbReference type="GO" id="GO:0005829">
    <property type="term" value="C:cytosol"/>
    <property type="evidence" value="ECO:0007669"/>
    <property type="project" value="TreeGrafter"/>
</dbReference>
<dbReference type="GO" id="GO:0043024">
    <property type="term" value="F:ribosomal small subunit binding"/>
    <property type="evidence" value="ECO:0007669"/>
    <property type="project" value="TreeGrafter"/>
</dbReference>
<dbReference type="GO" id="GO:0030490">
    <property type="term" value="P:maturation of SSU-rRNA"/>
    <property type="evidence" value="ECO:0007669"/>
    <property type="project" value="UniProtKB-UniRule"/>
</dbReference>
<dbReference type="Gene3D" id="3.30.300.20">
    <property type="match status" value="1"/>
</dbReference>
<dbReference type="HAMAP" id="MF_00003">
    <property type="entry name" value="RbfA"/>
    <property type="match status" value="1"/>
</dbReference>
<dbReference type="InterPro" id="IPR015946">
    <property type="entry name" value="KH_dom-like_a/b"/>
</dbReference>
<dbReference type="InterPro" id="IPR000238">
    <property type="entry name" value="RbfA"/>
</dbReference>
<dbReference type="InterPro" id="IPR023799">
    <property type="entry name" value="RbfA_dom_sf"/>
</dbReference>
<dbReference type="NCBIfam" id="TIGR00082">
    <property type="entry name" value="rbfA"/>
    <property type="match status" value="1"/>
</dbReference>
<dbReference type="PANTHER" id="PTHR33515">
    <property type="entry name" value="RIBOSOME-BINDING FACTOR A, CHLOROPLASTIC-RELATED"/>
    <property type="match status" value="1"/>
</dbReference>
<dbReference type="PANTHER" id="PTHR33515:SF1">
    <property type="entry name" value="RIBOSOME-BINDING FACTOR A, CHLOROPLASTIC-RELATED"/>
    <property type="match status" value="1"/>
</dbReference>
<dbReference type="Pfam" id="PF02033">
    <property type="entry name" value="RBFA"/>
    <property type="match status" value="1"/>
</dbReference>
<dbReference type="SUPFAM" id="SSF89919">
    <property type="entry name" value="Ribosome-binding factor A, RbfA"/>
    <property type="match status" value="1"/>
</dbReference>
<feature type="chain" id="PRO_0000321235" description="Ribosome-binding factor A">
    <location>
        <begin position="1"/>
        <end position="121"/>
    </location>
</feature>
<name>RBFA_OENOB</name>
<organism>
    <name type="scientific">Oenococcus oeni (strain ATCC BAA-331 / PSU-1)</name>
    <dbReference type="NCBI Taxonomy" id="203123"/>
    <lineage>
        <taxon>Bacteria</taxon>
        <taxon>Bacillati</taxon>
        <taxon>Bacillota</taxon>
        <taxon>Bacilli</taxon>
        <taxon>Lactobacillales</taxon>
        <taxon>Lactobacillaceae</taxon>
        <taxon>Oenococcus</taxon>
    </lineage>
</organism>
<comment type="function">
    <text evidence="1">One of several proteins that assist in the late maturation steps of the functional core of the 30S ribosomal subunit. Associates with free 30S ribosomal subunits (but not with 30S subunits that are part of 70S ribosomes or polysomes). Required for efficient processing of 16S rRNA. May interact with the 5'-terminal helix region of 16S rRNA.</text>
</comment>
<comment type="subunit">
    <text evidence="1">Monomer. Binds 30S ribosomal subunits, but not 50S ribosomal subunits or 70S ribosomes.</text>
</comment>
<comment type="subcellular location">
    <subcellularLocation>
        <location evidence="1">Cytoplasm</location>
    </subcellularLocation>
</comment>
<comment type="similarity">
    <text evidence="1">Belongs to the RbfA family.</text>
</comment>
<keyword id="KW-0963">Cytoplasm</keyword>
<keyword id="KW-1185">Reference proteome</keyword>
<keyword id="KW-0690">Ribosome biogenesis</keyword>